<keyword id="KW-0963">Cytoplasm</keyword>
<keyword id="KW-0444">Lipid biosynthesis</keyword>
<keyword id="KW-0443">Lipid metabolism</keyword>
<keyword id="KW-0594">Phospholipid biosynthesis</keyword>
<keyword id="KW-1208">Phospholipid metabolism</keyword>
<keyword id="KW-0808">Transferase</keyword>
<name>PLSX_LACCB</name>
<dbReference type="EC" id="2.3.1.274" evidence="1"/>
<dbReference type="EMBL" id="FM177140">
    <property type="protein sequence ID" value="CAQ66909.1"/>
    <property type="molecule type" value="Genomic_DNA"/>
</dbReference>
<dbReference type="SMR" id="B3WEV8"/>
<dbReference type="KEGG" id="lcb:LCABL_18290"/>
<dbReference type="HOGENOM" id="CLU_039379_1_1_9"/>
<dbReference type="UniPathway" id="UPA00085"/>
<dbReference type="GO" id="GO:0005737">
    <property type="term" value="C:cytoplasm"/>
    <property type="evidence" value="ECO:0007669"/>
    <property type="project" value="UniProtKB-SubCell"/>
</dbReference>
<dbReference type="GO" id="GO:0043811">
    <property type="term" value="F:phosphate:acyl-[acyl carrier protein] acyltransferase activity"/>
    <property type="evidence" value="ECO:0007669"/>
    <property type="project" value="UniProtKB-UniRule"/>
</dbReference>
<dbReference type="GO" id="GO:0006633">
    <property type="term" value="P:fatty acid biosynthetic process"/>
    <property type="evidence" value="ECO:0007669"/>
    <property type="project" value="UniProtKB-UniRule"/>
</dbReference>
<dbReference type="GO" id="GO:0008654">
    <property type="term" value="P:phospholipid biosynthetic process"/>
    <property type="evidence" value="ECO:0007669"/>
    <property type="project" value="UniProtKB-KW"/>
</dbReference>
<dbReference type="Gene3D" id="3.40.718.10">
    <property type="entry name" value="Isopropylmalate Dehydrogenase"/>
    <property type="match status" value="1"/>
</dbReference>
<dbReference type="HAMAP" id="MF_00019">
    <property type="entry name" value="PlsX"/>
    <property type="match status" value="1"/>
</dbReference>
<dbReference type="InterPro" id="IPR003664">
    <property type="entry name" value="FA_synthesis"/>
</dbReference>
<dbReference type="InterPro" id="IPR012281">
    <property type="entry name" value="Phospholipid_synth_PlsX-like"/>
</dbReference>
<dbReference type="NCBIfam" id="TIGR00182">
    <property type="entry name" value="plsX"/>
    <property type="match status" value="1"/>
</dbReference>
<dbReference type="PANTHER" id="PTHR30100">
    <property type="entry name" value="FATTY ACID/PHOSPHOLIPID SYNTHESIS PROTEIN PLSX"/>
    <property type="match status" value="1"/>
</dbReference>
<dbReference type="PANTHER" id="PTHR30100:SF1">
    <property type="entry name" value="PHOSPHATE ACYLTRANSFERASE"/>
    <property type="match status" value="1"/>
</dbReference>
<dbReference type="Pfam" id="PF02504">
    <property type="entry name" value="FA_synthesis"/>
    <property type="match status" value="1"/>
</dbReference>
<dbReference type="PIRSF" id="PIRSF002465">
    <property type="entry name" value="Phsphlp_syn_PlsX"/>
    <property type="match status" value="1"/>
</dbReference>
<dbReference type="SUPFAM" id="SSF53659">
    <property type="entry name" value="Isocitrate/Isopropylmalate dehydrogenase-like"/>
    <property type="match status" value="1"/>
</dbReference>
<evidence type="ECO:0000255" key="1">
    <source>
        <dbReference type="HAMAP-Rule" id="MF_00019"/>
    </source>
</evidence>
<proteinExistence type="inferred from homology"/>
<accession>B3WEV8</accession>
<sequence length="341" mass="36174">MKIAIDAMGGDNAPEVVIAGVEKARDANKELTFLLYGDEAKIKPLIHHDERLTIIHTPEKINSDDEPVRAIRRKKQASMVLAAQAVKQGEADAMVSLGSTGALLAAGLFIIGRIRAIERPGLLPTLPTVDGKGFVMLDVGANAENRPYHLLQYAIMGSYYAKDVRNVENPRVGLLNNGTEANKGDKMHQEAHDLLAAAPGINFVGNVESSDILNGPADVVVTDGFTGNATLKAIEGTVRTVMHMLKGAIYEGGLSGKLGGLFLKGNLKSMASTFDISSYGGAVLLGLKAPLIKAHGAADAETVYYTLLQTAKMVQNGTVTKVADYFDAHPEVAEAKTAEKA</sequence>
<organism>
    <name type="scientific">Lacticaseibacillus casei (strain BL23)</name>
    <name type="common">Lactobacillus casei</name>
    <dbReference type="NCBI Taxonomy" id="543734"/>
    <lineage>
        <taxon>Bacteria</taxon>
        <taxon>Bacillati</taxon>
        <taxon>Bacillota</taxon>
        <taxon>Bacilli</taxon>
        <taxon>Lactobacillales</taxon>
        <taxon>Lactobacillaceae</taxon>
        <taxon>Lacticaseibacillus</taxon>
    </lineage>
</organism>
<protein>
    <recommendedName>
        <fullName evidence="1">Phosphate acyltransferase</fullName>
        <ecNumber evidence="1">2.3.1.274</ecNumber>
    </recommendedName>
    <alternativeName>
        <fullName evidence="1">Acyl-ACP phosphotransacylase</fullName>
    </alternativeName>
    <alternativeName>
        <fullName evidence="1">Acyl-[acyl-carrier-protein]--phosphate acyltransferase</fullName>
    </alternativeName>
    <alternativeName>
        <fullName evidence="1">Phosphate-acyl-ACP acyltransferase</fullName>
    </alternativeName>
</protein>
<comment type="function">
    <text evidence="1">Catalyzes the reversible formation of acyl-phosphate (acyl-PO(4)) from acyl-[acyl-carrier-protein] (acyl-ACP). This enzyme utilizes acyl-ACP as fatty acyl donor, but not acyl-CoA.</text>
</comment>
<comment type="catalytic activity">
    <reaction evidence="1">
        <text>a fatty acyl-[ACP] + phosphate = an acyl phosphate + holo-[ACP]</text>
        <dbReference type="Rhea" id="RHEA:42292"/>
        <dbReference type="Rhea" id="RHEA-COMP:9685"/>
        <dbReference type="Rhea" id="RHEA-COMP:14125"/>
        <dbReference type="ChEBI" id="CHEBI:43474"/>
        <dbReference type="ChEBI" id="CHEBI:59918"/>
        <dbReference type="ChEBI" id="CHEBI:64479"/>
        <dbReference type="ChEBI" id="CHEBI:138651"/>
        <dbReference type="EC" id="2.3.1.274"/>
    </reaction>
</comment>
<comment type="pathway">
    <text evidence="1">Lipid metabolism; phospholipid metabolism.</text>
</comment>
<comment type="subunit">
    <text evidence="1">Homodimer. Probably interacts with PlsY.</text>
</comment>
<comment type="subcellular location">
    <subcellularLocation>
        <location evidence="1">Cytoplasm</location>
    </subcellularLocation>
    <text evidence="1">Associated with the membrane possibly through PlsY.</text>
</comment>
<comment type="similarity">
    <text evidence="1">Belongs to the PlsX family.</text>
</comment>
<feature type="chain" id="PRO_1000089917" description="Phosphate acyltransferase">
    <location>
        <begin position="1"/>
        <end position="341"/>
    </location>
</feature>
<reference key="1">
    <citation type="submission" date="2008-06" db="EMBL/GenBank/DDBJ databases">
        <title>Lactobacillus casei BL23 complete genome sequence.</title>
        <authorList>
            <person name="Maze A."/>
            <person name="Boel G."/>
            <person name="Bourand A."/>
            <person name="Loux V."/>
            <person name="Gibrat J.F."/>
            <person name="Zuniga M."/>
            <person name="Hartke A."/>
            <person name="Deutscher J."/>
        </authorList>
    </citation>
    <scope>NUCLEOTIDE SEQUENCE [LARGE SCALE GENOMIC DNA]</scope>
    <source>
        <strain>BL23</strain>
    </source>
</reference>
<gene>
    <name evidence="1" type="primary">plsX</name>
    <name type="ordered locus">LCABL_18290</name>
</gene>